<organism>
    <name type="scientific">Homo sapiens</name>
    <name type="common">Human</name>
    <dbReference type="NCBI Taxonomy" id="9606"/>
    <lineage>
        <taxon>Eukaryota</taxon>
        <taxon>Metazoa</taxon>
        <taxon>Chordata</taxon>
        <taxon>Craniata</taxon>
        <taxon>Vertebrata</taxon>
        <taxon>Euteleostomi</taxon>
        <taxon>Mammalia</taxon>
        <taxon>Eutheria</taxon>
        <taxon>Euarchontoglires</taxon>
        <taxon>Primates</taxon>
        <taxon>Haplorrhini</taxon>
        <taxon>Catarrhini</taxon>
        <taxon>Hominidae</taxon>
        <taxon>Homo</taxon>
    </lineage>
</organism>
<evidence type="ECO:0000250" key="1">
    <source>
        <dbReference type="UniProtKB" id="A6H782"/>
    </source>
</evidence>
<evidence type="ECO:0000250" key="2">
    <source>
        <dbReference type="UniProtKB" id="Q4V8G8"/>
    </source>
</evidence>
<evidence type="ECO:0000250" key="3">
    <source>
        <dbReference type="UniProtKB" id="Q6X6Z7"/>
    </source>
</evidence>
<evidence type="ECO:0000255" key="4"/>
<evidence type="ECO:0000269" key="5">
    <source>
    </source>
</evidence>
<evidence type="ECO:0000269" key="6">
    <source>
    </source>
</evidence>
<evidence type="ECO:0000269" key="7">
    <source>
    </source>
</evidence>
<evidence type="ECO:0000269" key="8">
    <source ref="3"/>
</evidence>
<evidence type="ECO:0000305" key="9"/>
<evidence type="ECO:0007744" key="10">
    <source>
        <dbReference type="PDB" id="7UNG"/>
    </source>
</evidence>
<accession>Q9BXF9</accession>
<accession>B2RAS7</accession>
<accession>D3DTT0</accession>
<accession>Q8N5R5</accession>
<accession>Q96M48</accession>
<reference key="1">
    <citation type="submission" date="2001-01" db="EMBL/GenBank/DDBJ databases">
        <title>The 1,421,129 bp CMT1A duplication/HNPP deletion genomic region reveals unique genome architectural features and provides insights into the recent evolution of new genes.</title>
        <authorList>
            <person name="Inoue K."/>
            <person name="Dewar K."/>
            <person name="Katsanis N."/>
            <person name="Reiter L.T."/>
            <person name="Lander E.S."/>
            <person name="Devor K.L."/>
            <person name="Wyman D.W."/>
            <person name="Lupski J.R."/>
            <person name="Birren B."/>
        </authorList>
    </citation>
    <scope>NUCLEOTIDE SEQUENCE [MRNA]</scope>
</reference>
<reference key="2">
    <citation type="journal article" date="2004" name="Nat. Genet.">
        <title>Complete sequencing and characterization of 21,243 full-length human cDNAs.</title>
        <authorList>
            <person name="Ota T."/>
            <person name="Suzuki Y."/>
            <person name="Nishikawa T."/>
            <person name="Otsuki T."/>
            <person name="Sugiyama T."/>
            <person name="Irie R."/>
            <person name="Wakamatsu A."/>
            <person name="Hayashi K."/>
            <person name="Sato H."/>
            <person name="Nagai K."/>
            <person name="Kimura K."/>
            <person name="Makita H."/>
            <person name="Sekine M."/>
            <person name="Obayashi M."/>
            <person name="Nishi T."/>
            <person name="Shibahara T."/>
            <person name="Tanaka T."/>
            <person name="Ishii S."/>
            <person name="Yamamoto J."/>
            <person name="Saito K."/>
            <person name="Kawai Y."/>
            <person name="Isono Y."/>
            <person name="Nakamura Y."/>
            <person name="Nagahari K."/>
            <person name="Murakami K."/>
            <person name="Yasuda T."/>
            <person name="Iwayanagi T."/>
            <person name="Wagatsuma M."/>
            <person name="Shiratori A."/>
            <person name="Sudo H."/>
            <person name="Hosoiri T."/>
            <person name="Kaku Y."/>
            <person name="Kodaira H."/>
            <person name="Kondo H."/>
            <person name="Sugawara M."/>
            <person name="Takahashi M."/>
            <person name="Kanda K."/>
            <person name="Yokoi T."/>
            <person name="Furuya T."/>
            <person name="Kikkawa E."/>
            <person name="Omura Y."/>
            <person name="Abe K."/>
            <person name="Kamihara K."/>
            <person name="Katsuta N."/>
            <person name="Sato K."/>
            <person name="Tanikawa M."/>
            <person name="Yamazaki M."/>
            <person name="Ninomiya K."/>
            <person name="Ishibashi T."/>
            <person name="Yamashita H."/>
            <person name="Murakawa K."/>
            <person name="Fujimori K."/>
            <person name="Tanai H."/>
            <person name="Kimata M."/>
            <person name="Watanabe M."/>
            <person name="Hiraoka S."/>
            <person name="Chiba Y."/>
            <person name="Ishida S."/>
            <person name="Ono Y."/>
            <person name="Takiguchi S."/>
            <person name="Watanabe S."/>
            <person name="Yosida M."/>
            <person name="Hotuta T."/>
            <person name="Kusano J."/>
            <person name="Kanehori K."/>
            <person name="Takahashi-Fujii A."/>
            <person name="Hara H."/>
            <person name="Tanase T.-O."/>
            <person name="Nomura Y."/>
            <person name="Togiya S."/>
            <person name="Komai F."/>
            <person name="Hara R."/>
            <person name="Takeuchi K."/>
            <person name="Arita M."/>
            <person name="Imose N."/>
            <person name="Musashino K."/>
            <person name="Yuuki H."/>
            <person name="Oshima A."/>
            <person name="Sasaki N."/>
            <person name="Aotsuka S."/>
            <person name="Yoshikawa Y."/>
            <person name="Matsunawa H."/>
            <person name="Ichihara T."/>
            <person name="Shiohata N."/>
            <person name="Sano S."/>
            <person name="Moriya S."/>
            <person name="Momiyama H."/>
            <person name="Satoh N."/>
            <person name="Takami S."/>
            <person name="Terashima Y."/>
            <person name="Suzuki O."/>
            <person name="Nakagawa S."/>
            <person name="Senoh A."/>
            <person name="Mizoguchi H."/>
            <person name="Goto Y."/>
            <person name="Shimizu F."/>
            <person name="Wakebe H."/>
            <person name="Hishigaki H."/>
            <person name="Watanabe T."/>
            <person name="Sugiyama A."/>
            <person name="Takemoto M."/>
            <person name="Kawakami B."/>
            <person name="Yamazaki M."/>
            <person name="Watanabe K."/>
            <person name="Kumagai A."/>
            <person name="Itakura S."/>
            <person name="Fukuzumi Y."/>
            <person name="Fujimori Y."/>
            <person name="Komiyama M."/>
            <person name="Tashiro H."/>
            <person name="Tanigami A."/>
            <person name="Fujiwara T."/>
            <person name="Ono T."/>
            <person name="Yamada K."/>
            <person name="Fujii Y."/>
            <person name="Ozaki K."/>
            <person name="Hirao M."/>
            <person name="Ohmori Y."/>
            <person name="Kawabata A."/>
            <person name="Hikiji T."/>
            <person name="Kobatake N."/>
            <person name="Inagaki H."/>
            <person name="Ikema Y."/>
            <person name="Okamoto S."/>
            <person name="Okitani R."/>
            <person name="Kawakami T."/>
            <person name="Noguchi S."/>
            <person name="Itoh T."/>
            <person name="Shigeta K."/>
            <person name="Senba T."/>
            <person name="Matsumura K."/>
            <person name="Nakajima Y."/>
            <person name="Mizuno T."/>
            <person name="Morinaga M."/>
            <person name="Sasaki M."/>
            <person name="Togashi T."/>
            <person name="Oyama M."/>
            <person name="Hata H."/>
            <person name="Watanabe M."/>
            <person name="Komatsu T."/>
            <person name="Mizushima-Sugano J."/>
            <person name="Satoh T."/>
            <person name="Shirai Y."/>
            <person name="Takahashi Y."/>
            <person name="Nakagawa K."/>
            <person name="Okumura K."/>
            <person name="Nagase T."/>
            <person name="Nomura N."/>
            <person name="Kikuchi H."/>
            <person name="Masuho Y."/>
            <person name="Yamashita R."/>
            <person name="Nakai K."/>
            <person name="Yada T."/>
            <person name="Nakamura Y."/>
            <person name="Ohara O."/>
            <person name="Isogai T."/>
            <person name="Sugano S."/>
        </authorList>
    </citation>
    <scope>NUCLEOTIDE SEQUENCE [LARGE SCALE MRNA]</scope>
    <scope>VARIANT ALA-282</scope>
    <source>
        <tissue>Testis</tissue>
    </source>
</reference>
<reference key="3">
    <citation type="submission" date="2005-09" db="EMBL/GenBank/DDBJ databases">
        <authorList>
            <person name="Mural R.J."/>
            <person name="Istrail S."/>
            <person name="Sutton G.G."/>
            <person name="Florea L."/>
            <person name="Halpern A.L."/>
            <person name="Mobarry C.M."/>
            <person name="Lippert R."/>
            <person name="Walenz B."/>
            <person name="Shatkay H."/>
            <person name="Dew I."/>
            <person name="Miller J.R."/>
            <person name="Flanigan M.J."/>
            <person name="Edwards N.J."/>
            <person name="Bolanos R."/>
            <person name="Fasulo D."/>
            <person name="Halldorsson B.V."/>
            <person name="Hannenhalli S."/>
            <person name="Turner R."/>
            <person name="Yooseph S."/>
            <person name="Lu F."/>
            <person name="Nusskern D.R."/>
            <person name="Shue B.C."/>
            <person name="Zheng X.H."/>
            <person name="Zhong F."/>
            <person name="Delcher A.L."/>
            <person name="Huson D.H."/>
            <person name="Kravitz S.A."/>
            <person name="Mouchard L."/>
            <person name="Reinert K."/>
            <person name="Remington K.A."/>
            <person name="Clark A.G."/>
            <person name="Waterman M.S."/>
            <person name="Eichler E.E."/>
            <person name="Adams M.D."/>
            <person name="Hunkapiller M.W."/>
            <person name="Myers E.W."/>
            <person name="Venter J.C."/>
        </authorList>
    </citation>
    <scope>NUCLEOTIDE SEQUENCE [LARGE SCALE GENOMIC DNA]</scope>
    <scope>VARIANT ALA-282</scope>
</reference>
<reference key="4">
    <citation type="journal article" date="2004" name="Genome Res.">
        <title>The status, quality, and expansion of the NIH full-length cDNA project: the Mammalian Gene Collection (MGC).</title>
        <authorList>
            <consortium name="The MGC Project Team"/>
        </authorList>
    </citation>
    <scope>NUCLEOTIDE SEQUENCE [LARGE SCALE MRNA]</scope>
    <source>
        <tissue>Brain</tissue>
    </source>
</reference>
<reference evidence="10" key="5">
    <citation type="journal article" date="2022" name="Proc. Natl. Acad. Sci. U.S.A.">
        <title>SPACA9 is a lumenal protein of human ciliary singlet and doublet microtubules.</title>
        <authorList>
            <person name="Gui M."/>
            <person name="Croft J.T."/>
            <person name="Zabeo D."/>
            <person name="Acharya V."/>
            <person name="Kollman J.M."/>
            <person name="Burgoyne T."/>
            <person name="Hoog J.L."/>
            <person name="Brown A."/>
        </authorList>
    </citation>
    <scope>STRUCTURE BY ELECTRON MICROSCOPY (3.60 ANGSTROMS)</scope>
    <scope>FUNCTION</scope>
    <scope>SUBCELLULAR LOCATION</scope>
    <scope>TISSUE SPECIFICITY</scope>
</reference>
<reference key="6">
    <citation type="journal article" date="2023" name="Hum. Mol. Genet.">
        <title>Bi-allelic human TEKT3 mutations cause male infertility with oligoasthenoteratozoospermia due to acrosomal hypoplasia and reduced progressive motility.</title>
        <authorList>
            <person name="Liu Y."/>
            <person name="Li Y."/>
            <person name="Meng L."/>
            <person name="Li K."/>
            <person name="Gao Y."/>
            <person name="Lv M."/>
            <person name="Guo R."/>
            <person name="Xu Y."/>
            <person name="Zhou P."/>
            <person name="Wei Z."/>
            <person name="He X."/>
            <person name="Cao Y."/>
            <person name="Wu H."/>
            <person name="Tan Y."/>
            <person name="Hua R."/>
        </authorList>
    </citation>
    <scope>INVOLVEMENT IN SPGF81</scope>
    <scope>VARIANTS SPGF81 GLN-183 AND PRO-251</scope>
    <scope>CHARACTERIZATION OF VARIANTS SPGF81 GLN-183 AND PRO-251</scope>
    <scope>INTERACTION WITH TEKT1; TEKT2; TEKT4 AND TEKT5</scope>
    <scope>SUBCELLULAR LOCATION</scope>
    <scope>TISSUE SPECIFICITY</scope>
</reference>
<sequence length="490" mass="56636">MERVGCTLTTTYAHPRPTPTNFLPAISTMASSYRDRFPHSNLTHSLSLPWRPSTYYKVASNSPSVAPYCTRSQRVSENTMLPFVSNRTTFFTRYTPDDWYRSNLTNYQESNTSRHNSEKLRVDTSRLIQDKYQQTRKTQADTTQNLGERVNDIGFWKSEIIHELDEMIGETNALTDVKKRLERALMETEAPLQVARECLFHREKRMGIDLVHDEVEAQLLTEVDTILCCQERMKLHLDKAIAQLAANRASQHELEKDLSDKQTAYRIDDKCHHLRNTSDGVGYFRGVERVDATVSVPESWAKFTDDNILRSQSERAASAKLRDDIENLLVVTANEMWNQFNKVNLSFTNRIAETADAKNKIQTHLAKTLQEIFQTEMTIESIKKAIKDKTAFLKVAQTRLDERTRRPNIELCRDMAQLRLVNEVHEVDDTIQTLQQRLRDAEDTLQSLVHIKATLEYDLAVKANSLYIDQEKCMSMRKSYPNTLRLVGFC</sequence>
<feature type="chain" id="PRO_0000184568" description="Tektin-3">
    <location>
        <begin position="1"/>
        <end position="490"/>
    </location>
</feature>
<feature type="coiled-coil region" evidence="4">
    <location>
        <begin position="424"/>
        <end position="451"/>
    </location>
</feature>
<feature type="glycosylation site" description="O-linked (GalNAc...) threonine" evidence="4">
    <location>
        <position position="7"/>
    </location>
</feature>
<feature type="glycosylation site" description="O-linked (GalNAc...) threonine" evidence="4">
    <location>
        <position position="9"/>
    </location>
</feature>
<feature type="glycosylation site" description="O-linked (GalNAc...) threonine" evidence="4">
    <location>
        <position position="10"/>
    </location>
</feature>
<feature type="glycosylation site" description="N-linked (GlcNAc...) asparagine" evidence="4">
    <location>
        <position position="41"/>
    </location>
</feature>
<feature type="glycosylation site" description="N-linked (GlcNAc...) asparagine" evidence="4">
    <location>
        <position position="86"/>
    </location>
</feature>
<feature type="glycosylation site" description="N-linked (GlcNAc...) asparagine" evidence="4">
    <location>
        <position position="103"/>
    </location>
</feature>
<feature type="glycosylation site" description="N-linked (GlcNAc...) asparagine" evidence="4">
    <location>
        <position position="111"/>
    </location>
</feature>
<feature type="glycosylation site" description="N-linked (GlcNAc...) asparagine" evidence="4">
    <location>
        <position position="276"/>
    </location>
</feature>
<feature type="glycosylation site" description="N-linked (GlcNAc...) asparagine" evidence="4">
    <location>
        <position position="344"/>
    </location>
</feature>
<feature type="sequence variant" id="VAR_053721" description="In dbSNP:rs7226363.">
    <original>R</original>
    <variation>H</variation>
    <location>
        <position position="3"/>
    </location>
</feature>
<feature type="sequence variant" id="VAR_088218" description="In SPGF81; uncertain significance; loss of protein expression in vivo in patient's spermatozoa, but no effect in transfected cells; dbSNP:rs139570101." evidence="7">
    <original>R</original>
    <variation>Q</variation>
    <location>
        <position position="183"/>
    </location>
</feature>
<feature type="sequence variant" id="VAR_088219" description="In SPGF81; uncertain significance; loss of protein expression in vivo in patient's spermatozoa, but no effect in transfected cells." evidence="7">
    <original>Q</original>
    <variation>P</variation>
    <location>
        <position position="251"/>
    </location>
</feature>
<feature type="sequence variant" id="VAR_024658" description="In dbSNP:rs230898." evidence="5 8">
    <original>G</original>
    <variation>A</variation>
    <location>
        <position position="282"/>
    </location>
</feature>
<feature type="sequence variant" id="VAR_024659" description="In dbSNP:rs6502446.">
    <original>V</original>
    <variation>A</variation>
    <location>
        <position position="296"/>
    </location>
</feature>
<feature type="sequence variant" id="VAR_034550" description="In dbSNP:rs35855709.">
    <original>E</original>
    <variation>D</variation>
    <location>
        <position position="410"/>
    </location>
</feature>
<feature type="sequence conflict" description="In Ref. 4; AAH31688." evidence="9" ref="4">
    <original>D</original>
    <variation>N</variation>
    <location>
        <position position="268"/>
    </location>
</feature>
<protein>
    <recommendedName>
        <fullName>Tektin-3</fullName>
    </recommendedName>
</protein>
<gene>
    <name type="primary">TEKT3</name>
</gene>
<keyword id="KW-0002">3D-structure</keyword>
<keyword id="KW-0966">Cell projection</keyword>
<keyword id="KW-0969">Cilium</keyword>
<keyword id="KW-0175">Coiled coil</keyword>
<keyword id="KW-0963">Cytoplasm</keyword>
<keyword id="KW-0968">Cytoplasmic vesicle</keyword>
<keyword id="KW-0206">Cytoskeleton</keyword>
<keyword id="KW-0282">Flagellum</keyword>
<keyword id="KW-0325">Glycoprotein</keyword>
<keyword id="KW-0472">Membrane</keyword>
<keyword id="KW-1267">Proteomics identification</keyword>
<keyword id="KW-1185">Reference proteome</keyword>
<keyword id="KW-0832">Ubl conjugation</keyword>
<name>TEKT3_HUMAN</name>
<dbReference type="EMBL" id="AF334676">
    <property type="protein sequence ID" value="AAK15340.1"/>
    <property type="molecule type" value="mRNA"/>
</dbReference>
<dbReference type="EMBL" id="AK057390">
    <property type="protein sequence ID" value="BAB71464.1"/>
    <property type="molecule type" value="mRNA"/>
</dbReference>
<dbReference type="EMBL" id="AK314327">
    <property type="protein sequence ID" value="BAG36974.1"/>
    <property type="molecule type" value="mRNA"/>
</dbReference>
<dbReference type="EMBL" id="CH471108">
    <property type="protein sequence ID" value="EAW89942.1"/>
    <property type="molecule type" value="Genomic_DNA"/>
</dbReference>
<dbReference type="EMBL" id="CH471108">
    <property type="protein sequence ID" value="EAW89943.1"/>
    <property type="molecule type" value="Genomic_DNA"/>
</dbReference>
<dbReference type="EMBL" id="CH471108">
    <property type="protein sequence ID" value="EAW89944.1"/>
    <property type="molecule type" value="Genomic_DNA"/>
</dbReference>
<dbReference type="EMBL" id="BC031688">
    <property type="protein sequence ID" value="AAH31688.1"/>
    <property type="molecule type" value="mRNA"/>
</dbReference>
<dbReference type="CCDS" id="CCDS11169.1"/>
<dbReference type="RefSeq" id="NP_114104.1">
    <property type="nucleotide sequence ID" value="NM_031898.3"/>
</dbReference>
<dbReference type="RefSeq" id="XP_011522290.1">
    <property type="nucleotide sequence ID" value="XM_011523988.3"/>
</dbReference>
<dbReference type="RefSeq" id="XP_011522291.1">
    <property type="nucleotide sequence ID" value="XM_011523989.2"/>
</dbReference>
<dbReference type="RefSeq" id="XP_016880443.1">
    <property type="nucleotide sequence ID" value="XM_017024954.2"/>
</dbReference>
<dbReference type="PDB" id="7UNG">
    <property type="method" value="EM"/>
    <property type="resolution" value="3.60 A"/>
    <property type="chains" value="C0/C1/C2/C3/C4=1-490"/>
</dbReference>
<dbReference type="PDBsum" id="7UNG"/>
<dbReference type="EMDB" id="EMD-26624"/>
<dbReference type="SMR" id="Q9BXF9"/>
<dbReference type="BioGRID" id="122203">
    <property type="interactions" value="40"/>
</dbReference>
<dbReference type="FunCoup" id="Q9BXF9">
    <property type="interactions" value="77"/>
</dbReference>
<dbReference type="IntAct" id="Q9BXF9">
    <property type="interactions" value="39"/>
</dbReference>
<dbReference type="MINT" id="Q9BXF9"/>
<dbReference type="STRING" id="9606.ENSP00000379263"/>
<dbReference type="GlyCosmos" id="Q9BXF9">
    <property type="glycosylation" value="9 sites, No reported glycans"/>
</dbReference>
<dbReference type="GlyGen" id="Q9BXF9">
    <property type="glycosylation" value="10 sites, 1 N-linked glycan (1 site)"/>
</dbReference>
<dbReference type="iPTMnet" id="Q9BXF9"/>
<dbReference type="PhosphoSitePlus" id="Q9BXF9"/>
<dbReference type="BioMuta" id="TEKT3"/>
<dbReference type="DMDM" id="25009463"/>
<dbReference type="jPOST" id="Q9BXF9"/>
<dbReference type="MassIVE" id="Q9BXF9"/>
<dbReference type="PaxDb" id="9606-ENSP00000379263"/>
<dbReference type="PeptideAtlas" id="Q9BXF9"/>
<dbReference type="ProteomicsDB" id="79421"/>
<dbReference type="Pumba" id="Q9BXF9"/>
<dbReference type="Antibodypedia" id="25125">
    <property type="antibodies" value="142 antibodies from 20 providers"/>
</dbReference>
<dbReference type="DNASU" id="64518"/>
<dbReference type="Ensembl" id="ENST00000338696.6">
    <property type="protein sequence ID" value="ENSP00000343995.2"/>
    <property type="gene ID" value="ENSG00000125409.13"/>
</dbReference>
<dbReference type="Ensembl" id="ENST00000395930.6">
    <property type="protein sequence ID" value="ENSP00000379263.1"/>
    <property type="gene ID" value="ENSG00000125409.13"/>
</dbReference>
<dbReference type="GeneID" id="64518"/>
<dbReference type="KEGG" id="hsa:64518"/>
<dbReference type="MANE-Select" id="ENST00000395930.6">
    <property type="protein sequence ID" value="ENSP00000379263.1"/>
    <property type="RefSeq nucleotide sequence ID" value="NM_031898.3"/>
    <property type="RefSeq protein sequence ID" value="NP_114104.1"/>
</dbReference>
<dbReference type="UCSC" id="uc002gon.4">
    <property type="organism name" value="human"/>
</dbReference>
<dbReference type="AGR" id="HGNC:14293"/>
<dbReference type="CTD" id="64518"/>
<dbReference type="GeneCards" id="TEKT3"/>
<dbReference type="HGNC" id="HGNC:14293">
    <property type="gene designation" value="TEKT3"/>
</dbReference>
<dbReference type="HPA" id="ENSG00000125409">
    <property type="expression patterns" value="Tissue enriched (testis)"/>
</dbReference>
<dbReference type="MalaCards" id="TEKT3"/>
<dbReference type="MIM" id="612683">
    <property type="type" value="gene"/>
</dbReference>
<dbReference type="MIM" id="620277">
    <property type="type" value="phenotype"/>
</dbReference>
<dbReference type="neXtProt" id="NX_Q9BXF9"/>
<dbReference type="OpenTargets" id="ENSG00000125409"/>
<dbReference type="PharmGKB" id="PA37865"/>
<dbReference type="VEuPathDB" id="HostDB:ENSG00000125409"/>
<dbReference type="eggNOG" id="KOG2685">
    <property type="taxonomic scope" value="Eukaryota"/>
</dbReference>
<dbReference type="GeneTree" id="ENSGT00950000182894"/>
<dbReference type="HOGENOM" id="CLU_033588_2_1_1"/>
<dbReference type="InParanoid" id="Q9BXF9"/>
<dbReference type="OMA" id="CMEPISG"/>
<dbReference type="OrthoDB" id="9886517at2759"/>
<dbReference type="PAN-GO" id="Q9BXF9">
    <property type="GO annotations" value="4 GO annotations based on evolutionary models"/>
</dbReference>
<dbReference type="PhylomeDB" id="Q9BXF9"/>
<dbReference type="TreeFam" id="TF320754"/>
<dbReference type="PathwayCommons" id="Q9BXF9"/>
<dbReference type="SignaLink" id="Q9BXF9"/>
<dbReference type="BioGRID-ORCS" id="64518">
    <property type="hits" value="7 hits in 1144 CRISPR screens"/>
</dbReference>
<dbReference type="GenomeRNAi" id="64518"/>
<dbReference type="Pharos" id="Q9BXF9">
    <property type="development level" value="Tbio"/>
</dbReference>
<dbReference type="PRO" id="PR:Q9BXF9"/>
<dbReference type="Proteomes" id="UP000005640">
    <property type="component" value="Chromosome 17"/>
</dbReference>
<dbReference type="RNAct" id="Q9BXF9">
    <property type="molecule type" value="protein"/>
</dbReference>
<dbReference type="Bgee" id="ENSG00000125409">
    <property type="expression patterns" value="Expressed in left testis and 97 other cell types or tissues"/>
</dbReference>
<dbReference type="ExpressionAtlas" id="Q9BXF9">
    <property type="expression patterns" value="baseline and differential"/>
</dbReference>
<dbReference type="GO" id="GO:0002080">
    <property type="term" value="C:acrosomal membrane"/>
    <property type="evidence" value="ECO:0000250"/>
    <property type="project" value="CAFA"/>
</dbReference>
<dbReference type="GO" id="GO:0001669">
    <property type="term" value="C:acrosomal vesicle"/>
    <property type="evidence" value="ECO:0000250"/>
    <property type="project" value="UniProtKB"/>
</dbReference>
<dbReference type="GO" id="GO:0160111">
    <property type="term" value="C:axonemal A tubule inner sheath"/>
    <property type="evidence" value="ECO:0000250"/>
    <property type="project" value="UniProtKB"/>
</dbReference>
<dbReference type="GO" id="GO:0005879">
    <property type="term" value="C:axonemal microtubule"/>
    <property type="evidence" value="ECO:0000314"/>
    <property type="project" value="UniProtKB"/>
</dbReference>
<dbReference type="GO" id="GO:0070062">
    <property type="term" value="C:extracellular exosome"/>
    <property type="evidence" value="ECO:0007005"/>
    <property type="project" value="UniProtKB"/>
</dbReference>
<dbReference type="GO" id="GO:0015630">
    <property type="term" value="C:microtubule cytoskeleton"/>
    <property type="evidence" value="ECO:0000318"/>
    <property type="project" value="GO_Central"/>
</dbReference>
<dbReference type="GO" id="GO:0005634">
    <property type="term" value="C:nucleus"/>
    <property type="evidence" value="ECO:0007005"/>
    <property type="project" value="UniProtKB"/>
</dbReference>
<dbReference type="GO" id="GO:0002081">
    <property type="term" value="C:outer acrosomal membrane"/>
    <property type="evidence" value="ECO:0007669"/>
    <property type="project" value="UniProtKB-SubCell"/>
</dbReference>
<dbReference type="GO" id="GO:0036126">
    <property type="term" value="C:sperm flagellum"/>
    <property type="evidence" value="ECO:0000250"/>
    <property type="project" value="UniProtKB"/>
</dbReference>
<dbReference type="GO" id="GO:0060271">
    <property type="term" value="P:cilium assembly"/>
    <property type="evidence" value="ECO:0000250"/>
    <property type="project" value="CAFA"/>
</dbReference>
<dbReference type="GO" id="GO:0060294">
    <property type="term" value="P:cilium movement involved in cell motility"/>
    <property type="evidence" value="ECO:0000318"/>
    <property type="project" value="GO_Central"/>
</dbReference>
<dbReference type="GO" id="GO:0030317">
    <property type="term" value="P:flagellated sperm motility"/>
    <property type="evidence" value="ECO:0000250"/>
    <property type="project" value="UniProtKB"/>
</dbReference>
<dbReference type="GO" id="GO:0060378">
    <property type="term" value="P:regulation of brood size"/>
    <property type="evidence" value="ECO:0000250"/>
    <property type="project" value="UniProtKB"/>
</dbReference>
<dbReference type="InterPro" id="IPR048256">
    <property type="entry name" value="Tektin-like"/>
</dbReference>
<dbReference type="InterPro" id="IPR000435">
    <property type="entry name" value="Tektins"/>
</dbReference>
<dbReference type="PANTHER" id="PTHR19960">
    <property type="entry name" value="TEKTIN"/>
    <property type="match status" value="1"/>
</dbReference>
<dbReference type="PANTHER" id="PTHR19960:SF24">
    <property type="entry name" value="TEKTIN-3"/>
    <property type="match status" value="1"/>
</dbReference>
<dbReference type="Pfam" id="PF03148">
    <property type="entry name" value="Tektin"/>
    <property type="match status" value="1"/>
</dbReference>
<dbReference type="PRINTS" id="PR00511">
    <property type="entry name" value="TEKTIN"/>
</dbReference>
<comment type="function">
    <text evidence="1 3 6">Microtubule inner protein (MIP) part of the dynein-decorated doublet microtubules (DMTs) in cilia and flagellar axoneme (PubMed:36191189). Forms filamentous polymers in the walls of ciliary and flagellar microtubules (By similarity). Required for normal sperm mobility (By similarity).</text>
</comment>
<comment type="subunit">
    <text evidence="3 7">Microtubule inner protein component of sperm flagellar doublet microtubules (By similarity). Interacts with TEKT1, TEKT2, TEKT4 and TEKT5 (PubMed:36708031). Interacts with CCDC38 (By similarity).</text>
</comment>
<comment type="interaction">
    <interactant intactId="EBI-8644516">
        <id>Q9BXF9</id>
    </interactant>
    <interactant intactId="EBI-949782">
        <id>Q96IF1</id>
        <label>AJUBA</label>
    </interactant>
    <organismsDiffer>false</organismsDiffer>
    <experiments>3</experiments>
</comment>
<comment type="interaction">
    <interactant intactId="EBI-8644516">
        <id>Q9BXF9</id>
    </interactant>
    <interactant intactId="EBI-948603">
        <id>Q03989</id>
        <label>ARID5A</label>
    </interactant>
    <organismsDiffer>false</organismsDiffer>
    <experiments>3</experiments>
</comment>
<comment type="interaction">
    <interactant intactId="EBI-8644516">
        <id>Q9BXF9</id>
    </interactant>
    <interactant intactId="EBI-19946665">
        <id>Q86U10</id>
        <label>ASPG</label>
    </interactant>
    <organismsDiffer>false</organismsDiffer>
    <experiments>3</experiments>
</comment>
<comment type="interaction">
    <interactant intactId="EBI-8644516">
        <id>Q9BXF9</id>
    </interactant>
    <interactant intactId="EBI-11954292">
        <id>Q86V38</id>
        <label>ATN1</label>
    </interactant>
    <organismsDiffer>false</organismsDiffer>
    <experiments>3</experiments>
</comment>
<comment type="interaction">
    <interactant intactId="EBI-8644516">
        <id>Q9BXF9</id>
    </interactant>
    <interactant intactId="EBI-739580">
        <id>Q13137</id>
        <label>CALCOCO2</label>
    </interactant>
    <organismsDiffer>false</organismsDiffer>
    <experiments>5</experiments>
</comment>
<comment type="interaction">
    <interactant intactId="EBI-8644516">
        <id>Q9BXF9</id>
    </interactant>
    <interactant intactId="EBI-743033">
        <id>Q9NZN8</id>
        <label>CNOT2</label>
    </interactant>
    <organismsDiffer>false</organismsDiffer>
    <experiments>3</experiments>
</comment>
<comment type="interaction">
    <interactant intactId="EBI-8644516">
        <id>Q9BXF9</id>
    </interactant>
    <interactant intactId="EBI-748248">
        <id>Q8WTU0</id>
        <label>DDI1</label>
    </interactant>
    <organismsDiffer>false</organismsDiffer>
    <experiments>3</experiments>
</comment>
<comment type="interaction">
    <interactant intactId="EBI-8644516">
        <id>Q9BXF9</id>
    </interactant>
    <interactant intactId="EBI-739467">
        <id>Q9H8Y8</id>
        <label>GORASP2</label>
    </interactant>
    <organismsDiffer>false</organismsDiffer>
    <experiments>4</experiments>
</comment>
<comment type="interaction">
    <interactant intactId="EBI-8644516">
        <id>Q9BXF9</id>
    </interactant>
    <interactant intactId="EBI-351590">
        <id>P31943</id>
        <label>HNRNPH1</label>
    </interactant>
    <organismsDiffer>false</organismsDiffer>
    <experiments>3</experiments>
</comment>
<comment type="interaction">
    <interactant intactId="EBI-8644516">
        <id>Q9BXF9</id>
    </interactant>
    <interactant intactId="EBI-747204">
        <id>Q9UKT9</id>
        <label>IKZF3</label>
    </interactant>
    <organismsDiffer>false</organismsDiffer>
    <experiments>3</experiments>
</comment>
<comment type="interaction">
    <interactant intactId="EBI-8644516">
        <id>Q9BXF9</id>
    </interactant>
    <interactant intactId="EBI-12081118">
        <id>Q1MX18</id>
        <label>INSC</label>
    </interactant>
    <organismsDiffer>false</organismsDiffer>
    <experiments>5</experiments>
</comment>
<comment type="interaction">
    <interactant intactId="EBI-8644516">
        <id>Q9BXF9</id>
    </interactant>
    <interactant intactId="EBI-1047093">
        <id>O76011</id>
        <label>KRT34</label>
    </interactant>
    <organismsDiffer>false</organismsDiffer>
    <experiments>3</experiments>
</comment>
<comment type="interaction">
    <interactant intactId="EBI-8644516">
        <id>Q9BXF9</id>
    </interactant>
    <interactant intactId="EBI-11992140">
        <id>Q3LI76</id>
        <label>KRTAP15-1</label>
    </interactant>
    <organismsDiffer>false</organismsDiffer>
    <experiments>3</experiments>
</comment>
<comment type="interaction">
    <interactant intactId="EBI-8644516">
        <id>Q9BXF9</id>
    </interactant>
    <interactant intactId="EBI-1048945">
        <id>Q3LI72</id>
        <label>KRTAP19-5</label>
    </interactant>
    <organismsDiffer>false</organismsDiffer>
    <experiments>3</experiments>
</comment>
<comment type="interaction">
    <interactant intactId="EBI-8644516">
        <id>Q9BXF9</id>
    </interactant>
    <interactant intactId="EBI-3957672">
        <id>Q6PEX3</id>
        <label>KRTAP26-1</label>
    </interactant>
    <organismsDiffer>false</organismsDiffer>
    <experiments>3</experiments>
</comment>
<comment type="interaction">
    <interactant intactId="EBI-8644516">
        <id>Q9BXF9</id>
    </interactant>
    <interactant intactId="EBI-9996449">
        <id>Q9BYR8</id>
        <label>KRTAP3-1</label>
    </interactant>
    <organismsDiffer>false</organismsDiffer>
    <experiments>3</experiments>
</comment>
<comment type="interaction">
    <interactant intactId="EBI-8644516">
        <id>Q9BXF9</id>
    </interactant>
    <interactant intactId="EBI-12111050">
        <id>Q3LI64</id>
        <label>KRTAP6-1</label>
    </interactant>
    <organismsDiffer>false</organismsDiffer>
    <experiments>3</experiments>
</comment>
<comment type="interaction">
    <interactant intactId="EBI-8644516">
        <id>Q9BXF9</id>
    </interactant>
    <interactant intactId="EBI-11962084">
        <id>Q3LI66</id>
        <label>KRTAP6-2</label>
    </interactant>
    <organismsDiffer>false</organismsDiffer>
    <experiments>3</experiments>
</comment>
<comment type="interaction">
    <interactant intactId="EBI-8644516">
        <id>Q9BXF9</id>
    </interactant>
    <interactant intactId="EBI-10261141">
        <id>Q8IUC2</id>
        <label>KRTAP8-1</label>
    </interactant>
    <organismsDiffer>false</organismsDiffer>
    <experiments>3</experiments>
</comment>
<comment type="interaction">
    <interactant intactId="EBI-8644516">
        <id>Q9BXF9</id>
    </interactant>
    <interactant intactId="EBI-9088686">
        <id>Q14847-2</id>
        <label>LASP1</label>
    </interactant>
    <organismsDiffer>false</organismsDiffer>
    <experiments>3</experiments>
</comment>
<comment type="interaction">
    <interactant intactId="EBI-8644516">
        <id>Q9BXF9</id>
    </interactant>
    <interactant intactId="EBI-11959475">
        <id>P25791-3</id>
        <label>LMO2</label>
    </interactant>
    <organismsDiffer>false</organismsDiffer>
    <experiments>3</experiments>
</comment>
<comment type="interaction">
    <interactant intactId="EBI-8644516">
        <id>Q9BXF9</id>
    </interactant>
    <interactant intactId="EBI-8487781">
        <id>Q8N6F8</id>
        <label>METTL27</label>
    </interactant>
    <organismsDiffer>false</organismsDiffer>
    <experiments>3</experiments>
</comment>
<comment type="interaction">
    <interactant intactId="EBI-8644516">
        <id>Q9BXF9</id>
    </interactant>
    <interactant intactId="EBI-536879">
        <id>O43482</id>
        <label>OIP5</label>
    </interactant>
    <organismsDiffer>false</organismsDiffer>
    <experiments>5</experiments>
</comment>
<comment type="interaction">
    <interactant intactId="EBI-8644516">
        <id>Q9BXF9</id>
    </interactant>
    <interactant intactId="EBI-2876622">
        <id>Q9UPG8</id>
        <label>PLAGL2</label>
    </interactant>
    <organismsDiffer>false</organismsDiffer>
    <experiments>3</experiments>
</comment>
<comment type="interaction">
    <interactant intactId="EBI-8644516">
        <id>Q9BXF9</id>
    </interactant>
    <interactant intactId="EBI-949255">
        <id>Q58EX7</id>
        <label>PLEKHG4</label>
    </interactant>
    <organismsDiffer>false</organismsDiffer>
    <experiments>3</experiments>
</comment>
<comment type="interaction">
    <interactant intactId="EBI-8644516">
        <id>Q9BXF9</id>
    </interactant>
    <interactant intactId="EBI-744023">
        <id>Q9BTL3</id>
        <label>RAMAC</label>
    </interactant>
    <organismsDiffer>false</organismsDiffer>
    <experiments>3</experiments>
</comment>
<comment type="interaction">
    <interactant intactId="EBI-8644516">
        <id>Q9BXF9</id>
    </interactant>
    <interactant intactId="EBI-746118">
        <id>Q8HWS3</id>
        <label>RFX6</label>
    </interactant>
    <organismsDiffer>false</organismsDiffer>
    <experiments>3</experiments>
</comment>
<comment type="interaction">
    <interactant intactId="EBI-8644516">
        <id>Q9BXF9</id>
    </interactant>
    <interactant intactId="EBI-12021638">
        <id>Q8NA69</id>
        <label>SAXO5</label>
    </interactant>
    <organismsDiffer>false</organismsDiffer>
    <experiments>3</experiments>
</comment>
<comment type="interaction">
    <interactant intactId="EBI-8644516">
        <id>Q9BXF9</id>
    </interactant>
    <interactant intactId="EBI-11959123">
        <id>Q99932-2</id>
        <label>SPAG8</label>
    </interactant>
    <organismsDiffer>false</organismsDiffer>
    <experiments>4</experiments>
</comment>
<comment type="interaction">
    <interactant intactId="EBI-8644516">
        <id>Q9BXF9</id>
    </interactant>
    <interactant intactId="EBI-949753">
        <id>Q63HR2</id>
        <label>TNS2</label>
    </interactant>
    <organismsDiffer>false</organismsDiffer>
    <experiments>3</experiments>
</comment>
<comment type="interaction">
    <interactant intactId="EBI-8644516">
        <id>Q9BXF9</id>
    </interactant>
    <interactant intactId="EBI-355744">
        <id>Q12933</id>
        <label>TRAF2</label>
    </interactant>
    <organismsDiffer>false</organismsDiffer>
    <experiments>6</experiments>
</comment>
<comment type="interaction">
    <interactant intactId="EBI-8644516">
        <id>Q9BXF9</id>
    </interactant>
    <interactant intactId="EBI-492476">
        <id>Q96RU7</id>
        <label>TRIB3</label>
    </interactant>
    <organismsDiffer>false</organismsDiffer>
    <experiments>3</experiments>
</comment>
<comment type="interaction">
    <interactant intactId="EBI-8644516">
        <id>Q9BXF9</id>
    </interactant>
    <interactant intactId="EBI-12040603">
        <id>Q9NZC7-5</id>
        <label>WWOX</label>
    </interactant>
    <organismsDiffer>false</organismsDiffer>
    <experiments>3</experiments>
</comment>
<comment type="subcellular location">
    <subcellularLocation>
        <location evidence="6">Cytoplasm</location>
        <location evidence="6">Cytoskeleton</location>
        <location evidence="6">Cilium axoneme</location>
    </subcellularLocation>
    <subcellularLocation>
        <location evidence="7">Cytoplasm</location>
        <location evidence="7">Cytoskeleton</location>
        <location evidence="7">Flagellum axoneme</location>
    </subcellularLocation>
    <subcellularLocation>
        <location evidence="1 2">Cytoplasmic vesicle</location>
        <location evidence="1 2">Secretory vesicle</location>
        <location evidence="1 2">Acrosome outer membrane</location>
        <topology evidence="2">Peripheral membrane protein</topology>
    </subcellularLocation>
    <text evidence="1 2 7">In spermatozoa, preferentially localizes to the flagella, but also found in the head (PubMed:36708031). In the sperm flagellum, localizes to the periaxonemal region where it associates with the mitochondrial sheath and outer dense fibers (By similarity). Not detected in the central axonemal region of the flagellum (By similarity). Associates with the acrosome membrane in the equatorial segment of the sperm head (By similarity). Also detected just below the plasma membrane in the post-acrosomal region where it might localize to the postacrosomal dense lamina (By similarity). However, other studies report little or no expression in the postacrosomal region (By similarity). Translocates from the postacrosomal region to the equatorial segment after sperm activation (By similarity). Retained in the postacromal region, but not the equatorial segment, following the acrosome reaction (By similarity). Some studies report strong expression in the anterior cap region (By similarity). However, other studies report little or no expression in the acrosomal cap (By similarity).</text>
</comment>
<comment type="tissue specificity">
    <text evidence="6 7">Expressed in spermatozoa (PubMed:36708031). Expressed in airway epithelial cells (PubMed:36191189).</text>
</comment>
<comment type="PTM">
    <text evidence="1">N- and O-glycosylated.</text>
</comment>
<comment type="PTM">
    <text evidence="1">May be proteolytically processed during the epididymal transit of spermatozoa.</text>
</comment>
<comment type="PTM">
    <text evidence="3">Ubiquitinated, leading to its degradation. Deubiquitinated by USP16, promoting its stability.</text>
</comment>
<comment type="disease" evidence="7">
    <disease id="DI-06619">
        <name>Spermatogenic failure 81</name>
        <acronym>SPGF81</acronym>
        <description>A male infertility disorder due to oligoasthenoteratozoospermia and characterized by reduced progressive sperm motility. Patient spermatozoa exhibit acrosomal hypoplasia and detachment of the acrosome from the sperm head.</description>
        <dbReference type="MIM" id="620277"/>
    </disease>
    <text>The disease may be caused by variants affecting the gene represented in this entry.</text>
</comment>
<comment type="similarity">
    <text evidence="9">Belongs to the tektin family.</text>
</comment>
<proteinExistence type="evidence at protein level"/>